<dbReference type="EC" id="7.2.1.1" evidence="1"/>
<dbReference type="EMBL" id="AL590842">
    <property type="protein sequence ID" value="CAL21829.1"/>
    <property type="molecule type" value="Genomic_DNA"/>
</dbReference>
<dbReference type="EMBL" id="AE009952">
    <property type="protein sequence ID" value="AAM84537.1"/>
    <property type="molecule type" value="Genomic_DNA"/>
</dbReference>
<dbReference type="EMBL" id="AE017042">
    <property type="protein sequence ID" value="AAS60964.1"/>
    <property type="molecule type" value="Genomic_DNA"/>
</dbReference>
<dbReference type="PIR" id="AB0393">
    <property type="entry name" value="AB0393"/>
</dbReference>
<dbReference type="RefSeq" id="WP_002208711.1">
    <property type="nucleotide sequence ID" value="NZ_WUCM01000034.1"/>
</dbReference>
<dbReference type="RefSeq" id="YP_002348137.1">
    <property type="nucleotide sequence ID" value="NC_003143.1"/>
</dbReference>
<dbReference type="SMR" id="Q8ZBZ5"/>
<dbReference type="STRING" id="214092.YPO3235"/>
<dbReference type="PaxDb" id="214092-YPO3235"/>
<dbReference type="DNASU" id="1145903"/>
<dbReference type="EnsemblBacteria" id="AAS60964">
    <property type="protein sequence ID" value="AAS60964"/>
    <property type="gene ID" value="YP_0698"/>
</dbReference>
<dbReference type="GeneID" id="57975484"/>
<dbReference type="KEGG" id="ype:YPO3235"/>
<dbReference type="KEGG" id="ypk:y0956"/>
<dbReference type="KEGG" id="ypm:YP_0698"/>
<dbReference type="PATRIC" id="fig|214092.21.peg.3695"/>
<dbReference type="eggNOG" id="COG2871">
    <property type="taxonomic scope" value="Bacteria"/>
</dbReference>
<dbReference type="HOGENOM" id="CLU_003827_7_2_6"/>
<dbReference type="OMA" id="YWYGGRS"/>
<dbReference type="OrthoDB" id="9806195at2"/>
<dbReference type="Proteomes" id="UP000000815">
    <property type="component" value="Chromosome"/>
</dbReference>
<dbReference type="Proteomes" id="UP000001019">
    <property type="component" value="Chromosome"/>
</dbReference>
<dbReference type="Proteomes" id="UP000002490">
    <property type="component" value="Chromosome"/>
</dbReference>
<dbReference type="GO" id="GO:0005886">
    <property type="term" value="C:plasma membrane"/>
    <property type="evidence" value="ECO:0007669"/>
    <property type="project" value="UniProtKB-SubCell"/>
</dbReference>
<dbReference type="GO" id="GO:0051537">
    <property type="term" value="F:2 iron, 2 sulfur cluster binding"/>
    <property type="evidence" value="ECO:0007669"/>
    <property type="project" value="UniProtKB-KW"/>
</dbReference>
<dbReference type="GO" id="GO:0009055">
    <property type="term" value="F:electron transfer activity"/>
    <property type="evidence" value="ECO:0007669"/>
    <property type="project" value="UniProtKB-UniRule"/>
</dbReference>
<dbReference type="GO" id="GO:0046872">
    <property type="term" value="F:metal ion binding"/>
    <property type="evidence" value="ECO:0007669"/>
    <property type="project" value="UniProtKB-KW"/>
</dbReference>
<dbReference type="GO" id="GO:0016655">
    <property type="term" value="F:oxidoreductase activity, acting on NAD(P)H, quinone or similar compound as acceptor"/>
    <property type="evidence" value="ECO:0007669"/>
    <property type="project" value="InterPro"/>
</dbReference>
<dbReference type="GO" id="GO:0006814">
    <property type="term" value="P:sodium ion transport"/>
    <property type="evidence" value="ECO:0007669"/>
    <property type="project" value="UniProtKB-UniRule"/>
</dbReference>
<dbReference type="CDD" id="cd06188">
    <property type="entry name" value="NADH_quinone_reductase"/>
    <property type="match status" value="1"/>
</dbReference>
<dbReference type="FunFam" id="3.40.50.80:FF:000014">
    <property type="entry name" value="Na(+)-translocating NADH-quinone reductase subunit F"/>
    <property type="match status" value="1"/>
</dbReference>
<dbReference type="Gene3D" id="3.10.20.30">
    <property type="match status" value="1"/>
</dbReference>
<dbReference type="Gene3D" id="3.40.50.80">
    <property type="entry name" value="Nucleotide-binding domain of ferredoxin-NADP reductase (FNR) module"/>
    <property type="match status" value="1"/>
</dbReference>
<dbReference type="Gene3D" id="2.40.30.10">
    <property type="entry name" value="Translation factors"/>
    <property type="match status" value="1"/>
</dbReference>
<dbReference type="HAMAP" id="MF_00430">
    <property type="entry name" value="NqrF"/>
    <property type="match status" value="1"/>
</dbReference>
<dbReference type="InterPro" id="IPR036010">
    <property type="entry name" value="2Fe-2S_ferredoxin-like_sf"/>
</dbReference>
<dbReference type="InterPro" id="IPR001041">
    <property type="entry name" value="2Fe-2S_ferredoxin-type"/>
</dbReference>
<dbReference type="InterPro" id="IPR012675">
    <property type="entry name" value="Beta-grasp_dom_sf"/>
</dbReference>
<dbReference type="InterPro" id="IPR008333">
    <property type="entry name" value="Cbr1-like_FAD-bd_dom"/>
</dbReference>
<dbReference type="InterPro" id="IPR017927">
    <property type="entry name" value="FAD-bd_FR_type"/>
</dbReference>
<dbReference type="InterPro" id="IPR001709">
    <property type="entry name" value="Flavoprot_Pyr_Nucl_cyt_Rdtase"/>
</dbReference>
<dbReference type="InterPro" id="IPR039261">
    <property type="entry name" value="FNR_nucleotide-bd"/>
</dbReference>
<dbReference type="InterPro" id="IPR010205">
    <property type="entry name" value="NqrF"/>
</dbReference>
<dbReference type="InterPro" id="IPR001433">
    <property type="entry name" value="OxRdtase_FAD/NAD-bd"/>
</dbReference>
<dbReference type="InterPro" id="IPR017938">
    <property type="entry name" value="Riboflavin_synthase-like_b-brl"/>
</dbReference>
<dbReference type="NCBIfam" id="TIGR01941">
    <property type="entry name" value="nqrF"/>
    <property type="match status" value="1"/>
</dbReference>
<dbReference type="PANTHER" id="PTHR43644">
    <property type="entry name" value="NA(+)-TRANSLOCATING NADH-QUINONE REDUCTASE SUBUNIT"/>
    <property type="match status" value="1"/>
</dbReference>
<dbReference type="PANTHER" id="PTHR43644:SF1">
    <property type="entry name" value="NAD(P)H-FLAVIN REDUCTASE"/>
    <property type="match status" value="1"/>
</dbReference>
<dbReference type="Pfam" id="PF00970">
    <property type="entry name" value="FAD_binding_6"/>
    <property type="match status" value="1"/>
</dbReference>
<dbReference type="Pfam" id="PF00111">
    <property type="entry name" value="Fer2"/>
    <property type="match status" value="1"/>
</dbReference>
<dbReference type="Pfam" id="PF00175">
    <property type="entry name" value="NAD_binding_1"/>
    <property type="match status" value="1"/>
</dbReference>
<dbReference type="PIRSF" id="PIRSF000044">
    <property type="entry name" value="Cis_Diol_DH_RD"/>
    <property type="match status" value="1"/>
</dbReference>
<dbReference type="PRINTS" id="PR00371">
    <property type="entry name" value="FPNCR"/>
</dbReference>
<dbReference type="SUPFAM" id="SSF54292">
    <property type="entry name" value="2Fe-2S ferredoxin-like"/>
    <property type="match status" value="1"/>
</dbReference>
<dbReference type="SUPFAM" id="SSF52343">
    <property type="entry name" value="Ferredoxin reductase-like, C-terminal NADP-linked domain"/>
    <property type="match status" value="1"/>
</dbReference>
<dbReference type="SUPFAM" id="SSF63380">
    <property type="entry name" value="Riboflavin synthase domain-like"/>
    <property type="match status" value="1"/>
</dbReference>
<dbReference type="PROSITE" id="PS51085">
    <property type="entry name" value="2FE2S_FER_2"/>
    <property type="match status" value="1"/>
</dbReference>
<dbReference type="PROSITE" id="PS51384">
    <property type="entry name" value="FAD_FR"/>
    <property type="match status" value="1"/>
</dbReference>
<organism>
    <name type="scientific">Yersinia pestis</name>
    <dbReference type="NCBI Taxonomy" id="632"/>
    <lineage>
        <taxon>Bacteria</taxon>
        <taxon>Pseudomonadati</taxon>
        <taxon>Pseudomonadota</taxon>
        <taxon>Gammaproteobacteria</taxon>
        <taxon>Enterobacterales</taxon>
        <taxon>Yersiniaceae</taxon>
        <taxon>Yersinia</taxon>
    </lineage>
</organism>
<gene>
    <name evidence="1" type="primary">nqrF</name>
    <name type="ordered locus">YPO3235</name>
    <name type="ordered locus">y0956</name>
    <name type="ordered locus">YP_0698</name>
</gene>
<comment type="function">
    <text evidence="1">NQR complex catalyzes the reduction of ubiquinone-1 to ubiquinol by two successive reactions, coupled with the transport of Na(+) ions from the cytoplasm to the periplasm. The first step is catalyzed by NqrF, which accepts electrons from NADH and reduces ubiquinone-1 to ubisemiquinone by a one-electron transfer pathway.</text>
</comment>
<comment type="catalytic activity">
    <reaction evidence="1">
        <text>a ubiquinone + n Na(+)(in) + NADH + H(+) = a ubiquinol + n Na(+)(out) + NAD(+)</text>
        <dbReference type="Rhea" id="RHEA:47748"/>
        <dbReference type="Rhea" id="RHEA-COMP:9565"/>
        <dbReference type="Rhea" id="RHEA-COMP:9566"/>
        <dbReference type="ChEBI" id="CHEBI:15378"/>
        <dbReference type="ChEBI" id="CHEBI:16389"/>
        <dbReference type="ChEBI" id="CHEBI:17976"/>
        <dbReference type="ChEBI" id="CHEBI:29101"/>
        <dbReference type="ChEBI" id="CHEBI:57540"/>
        <dbReference type="ChEBI" id="CHEBI:57945"/>
        <dbReference type="EC" id="7.2.1.1"/>
    </reaction>
</comment>
<comment type="cofactor">
    <cofactor evidence="1">
        <name>[2Fe-2S] cluster</name>
        <dbReference type="ChEBI" id="CHEBI:190135"/>
    </cofactor>
    <text evidence="1">Binds 1 [2Fe-2S] cluster.</text>
</comment>
<comment type="cofactor">
    <cofactor evidence="1">
        <name>FAD</name>
        <dbReference type="ChEBI" id="CHEBI:57692"/>
    </cofactor>
</comment>
<comment type="subunit">
    <text evidence="1">Composed of six subunits; NqrA, NqrB, NqrC, NqrD, NqrE and NqrF.</text>
</comment>
<comment type="subcellular location">
    <subcellularLocation>
        <location evidence="1">Cell inner membrane</location>
        <topology evidence="1">Single-pass membrane protein</topology>
    </subcellularLocation>
</comment>
<comment type="similarity">
    <text evidence="1">Belongs to the NqrF family.</text>
</comment>
<accession>Q8ZBZ5</accession>
<accession>Q0WC51</accession>
<name>NQRF_YERPE</name>
<feature type="chain" id="PRO_0000074512" description="Na(+)-translocating NADH-quinone reductase subunit F">
    <location>
        <begin position="1"/>
        <end position="407"/>
    </location>
</feature>
<feature type="transmembrane region" description="Helical" evidence="1">
    <location>
        <begin position="3"/>
        <end position="23"/>
    </location>
</feature>
<feature type="domain" description="2Fe-2S ferredoxin-type" evidence="1">
    <location>
        <begin position="32"/>
        <end position="126"/>
    </location>
</feature>
<feature type="domain" description="FAD-binding FR-type" evidence="1">
    <location>
        <begin position="129"/>
        <end position="269"/>
    </location>
</feature>
<feature type="binding site" evidence="1">
    <location>
        <position position="69"/>
    </location>
    <ligand>
        <name>[2Fe-2S] cluster</name>
        <dbReference type="ChEBI" id="CHEBI:190135"/>
    </ligand>
</feature>
<feature type="binding site" evidence="1">
    <location>
        <position position="75"/>
    </location>
    <ligand>
        <name>[2Fe-2S] cluster</name>
        <dbReference type="ChEBI" id="CHEBI:190135"/>
    </ligand>
</feature>
<feature type="binding site" evidence="1">
    <location>
        <position position="78"/>
    </location>
    <ligand>
        <name>[2Fe-2S] cluster</name>
        <dbReference type="ChEBI" id="CHEBI:190135"/>
    </ligand>
</feature>
<feature type="binding site" evidence="1">
    <location>
        <position position="110"/>
    </location>
    <ligand>
        <name>[2Fe-2S] cluster</name>
        <dbReference type="ChEBI" id="CHEBI:190135"/>
    </ligand>
</feature>
<proteinExistence type="inferred from homology"/>
<evidence type="ECO:0000255" key="1">
    <source>
        <dbReference type="HAMAP-Rule" id="MF_00430"/>
    </source>
</evidence>
<protein>
    <recommendedName>
        <fullName evidence="1">Na(+)-translocating NADH-quinone reductase subunit F</fullName>
        <shortName evidence="1">Na(+)-NQR subunit F</shortName>
        <shortName evidence="1">Na(+)-translocating NQR subunit F</shortName>
        <ecNumber evidence="1">7.2.1.1</ecNumber>
    </recommendedName>
    <alternativeName>
        <fullName evidence="1">NQR complex subunit F</fullName>
    </alternativeName>
    <alternativeName>
        <fullName evidence="1">NQR-1 subunit F</fullName>
    </alternativeName>
</protein>
<keyword id="KW-0001">2Fe-2S</keyword>
<keyword id="KW-0997">Cell inner membrane</keyword>
<keyword id="KW-1003">Cell membrane</keyword>
<keyword id="KW-0274">FAD</keyword>
<keyword id="KW-0285">Flavoprotein</keyword>
<keyword id="KW-0406">Ion transport</keyword>
<keyword id="KW-0408">Iron</keyword>
<keyword id="KW-0411">Iron-sulfur</keyword>
<keyword id="KW-0472">Membrane</keyword>
<keyword id="KW-0479">Metal-binding</keyword>
<keyword id="KW-0520">NAD</keyword>
<keyword id="KW-1185">Reference proteome</keyword>
<keyword id="KW-0915">Sodium</keyword>
<keyword id="KW-0739">Sodium transport</keyword>
<keyword id="KW-1278">Translocase</keyword>
<keyword id="KW-0812">Transmembrane</keyword>
<keyword id="KW-1133">Transmembrane helix</keyword>
<keyword id="KW-0813">Transport</keyword>
<keyword id="KW-0830">Ubiquinone</keyword>
<reference key="1">
    <citation type="journal article" date="2001" name="Nature">
        <title>Genome sequence of Yersinia pestis, the causative agent of plague.</title>
        <authorList>
            <person name="Parkhill J."/>
            <person name="Wren B.W."/>
            <person name="Thomson N.R."/>
            <person name="Titball R.W."/>
            <person name="Holden M.T.G."/>
            <person name="Prentice M.B."/>
            <person name="Sebaihia M."/>
            <person name="James K.D."/>
            <person name="Churcher C.M."/>
            <person name="Mungall K.L."/>
            <person name="Baker S."/>
            <person name="Basham D."/>
            <person name="Bentley S.D."/>
            <person name="Brooks K."/>
            <person name="Cerdeno-Tarraga A.-M."/>
            <person name="Chillingworth T."/>
            <person name="Cronin A."/>
            <person name="Davies R.M."/>
            <person name="Davis P."/>
            <person name="Dougan G."/>
            <person name="Feltwell T."/>
            <person name="Hamlin N."/>
            <person name="Holroyd S."/>
            <person name="Jagels K."/>
            <person name="Karlyshev A.V."/>
            <person name="Leather S."/>
            <person name="Moule S."/>
            <person name="Oyston P.C.F."/>
            <person name="Quail M.A."/>
            <person name="Rutherford K.M."/>
            <person name="Simmonds M."/>
            <person name="Skelton J."/>
            <person name="Stevens K."/>
            <person name="Whitehead S."/>
            <person name="Barrell B.G."/>
        </authorList>
    </citation>
    <scope>NUCLEOTIDE SEQUENCE [LARGE SCALE GENOMIC DNA]</scope>
    <source>
        <strain>CO-92 / Biovar Orientalis</strain>
    </source>
</reference>
<reference key="2">
    <citation type="journal article" date="2002" name="J. Bacteriol.">
        <title>Genome sequence of Yersinia pestis KIM.</title>
        <authorList>
            <person name="Deng W."/>
            <person name="Burland V."/>
            <person name="Plunkett G. III"/>
            <person name="Boutin A."/>
            <person name="Mayhew G.F."/>
            <person name="Liss P."/>
            <person name="Perna N.T."/>
            <person name="Rose D.J."/>
            <person name="Mau B."/>
            <person name="Zhou S."/>
            <person name="Schwartz D.C."/>
            <person name="Fetherston J.D."/>
            <person name="Lindler L.E."/>
            <person name="Brubaker R.R."/>
            <person name="Plano G.V."/>
            <person name="Straley S.C."/>
            <person name="McDonough K.A."/>
            <person name="Nilles M.L."/>
            <person name="Matson J.S."/>
            <person name="Blattner F.R."/>
            <person name="Perry R.D."/>
        </authorList>
    </citation>
    <scope>NUCLEOTIDE SEQUENCE [LARGE SCALE GENOMIC DNA]</scope>
    <source>
        <strain>KIM10+ / Biovar Mediaevalis</strain>
    </source>
</reference>
<reference key="3">
    <citation type="journal article" date="2004" name="DNA Res.">
        <title>Complete genome sequence of Yersinia pestis strain 91001, an isolate avirulent to humans.</title>
        <authorList>
            <person name="Song Y."/>
            <person name="Tong Z."/>
            <person name="Wang J."/>
            <person name="Wang L."/>
            <person name="Guo Z."/>
            <person name="Han Y."/>
            <person name="Zhang J."/>
            <person name="Pei D."/>
            <person name="Zhou D."/>
            <person name="Qin H."/>
            <person name="Pang X."/>
            <person name="Han Y."/>
            <person name="Zhai J."/>
            <person name="Li M."/>
            <person name="Cui B."/>
            <person name="Qi Z."/>
            <person name="Jin L."/>
            <person name="Dai R."/>
            <person name="Chen F."/>
            <person name="Li S."/>
            <person name="Ye C."/>
            <person name="Du Z."/>
            <person name="Lin W."/>
            <person name="Wang J."/>
            <person name="Yu J."/>
            <person name="Yang H."/>
            <person name="Wang J."/>
            <person name="Huang P."/>
            <person name="Yang R."/>
        </authorList>
    </citation>
    <scope>NUCLEOTIDE SEQUENCE [LARGE SCALE GENOMIC DNA]</scope>
    <source>
        <strain>91001 / Biovar Mediaevalis</strain>
    </source>
</reference>
<sequence>MEIILGVVMFTLIVLALTVMILFAKSKLVNTGDITVEINEDEDKSFTAPAGDKLLNMLSSHGIFVSSACGGGGSCGQCRVTIKEGGGDILPTELSHISKREAKEGCRLACQVNVKQNLKIELPEEIFGVKKWTCEVISNDNKATFIKELKLKIPDGDVVPFRAGGFIQIEAEPHTVKYADFDVPTEYRGDWDKFNLFRFESVVTEPTVRAYSMANYPEEHGIILLNVRIATPPPSVPDAPPGIMSSYIWSLKPGDKVVISGPFGEFFAKDTDAEMVFIGGGAGMAPMRSHIFDQLKRLHSKRKISFWYGARSRREMFYEEDFDQLQAENDNFRWHVALSDPQPEDNWTGYTGFIHNVLLENYLKDHPAPEDCEFYMCGPPMMNAAVIKMLKDLGVEDENIMLDDFGG</sequence>